<protein>
    <recommendedName>
        <fullName>Tethering factor for nuclear proteasome STS1</fullName>
    </recommendedName>
</protein>
<keyword id="KW-0963">Cytoplasm</keyword>
<keyword id="KW-0539">Nucleus</keyword>
<keyword id="KW-0653">Protein transport</keyword>
<keyword id="KW-1185">Reference proteome</keyword>
<keyword id="KW-0813">Transport</keyword>
<comment type="function">
    <text evidence="1">Involved in ubiquitin-mediated protein degradation. Regulatory factor in the ubiquitin/proteasome pathway that controls the turnover of proteasome substrates. Targets proteasomes to the nucleus and facilitates the degradation of nuclear proteins (By similarity).</text>
</comment>
<comment type="subunit">
    <text evidence="1">Binds the proteasome.</text>
</comment>
<comment type="subcellular location">
    <subcellularLocation>
        <location evidence="1">Cytoplasm</location>
    </subcellularLocation>
    <subcellularLocation>
        <location evidence="1">Nucleus</location>
    </subcellularLocation>
</comment>
<comment type="similarity">
    <text evidence="3">Belongs to the cut8/STS1 family.</text>
</comment>
<evidence type="ECO:0000250" key="1"/>
<evidence type="ECO:0000256" key="2">
    <source>
        <dbReference type="SAM" id="MobiDB-lite"/>
    </source>
</evidence>
<evidence type="ECO:0000305" key="3"/>
<gene>
    <name type="primary">STS1</name>
    <name type="ORF">HCDG_01622</name>
</gene>
<dbReference type="EMBL" id="GG692420">
    <property type="protein sequence ID" value="EER43592.1"/>
    <property type="molecule type" value="Genomic_DNA"/>
</dbReference>
<dbReference type="SMR" id="C6H861"/>
<dbReference type="STRING" id="544712.C6H861"/>
<dbReference type="VEuPathDB" id="FungiDB:HCDG_01622"/>
<dbReference type="eggNOG" id="ENOG502RNK4">
    <property type="taxonomic scope" value="Eukaryota"/>
</dbReference>
<dbReference type="HOGENOM" id="CLU_033658_0_0_1"/>
<dbReference type="OMA" id="DYTPHFL"/>
<dbReference type="OrthoDB" id="4550at299071"/>
<dbReference type="Proteomes" id="UP000002624">
    <property type="component" value="Unassembled WGS sequence"/>
</dbReference>
<dbReference type="GO" id="GO:0005737">
    <property type="term" value="C:cytoplasm"/>
    <property type="evidence" value="ECO:0007669"/>
    <property type="project" value="UniProtKB-SubCell"/>
</dbReference>
<dbReference type="GO" id="GO:0031965">
    <property type="term" value="C:nuclear membrane"/>
    <property type="evidence" value="ECO:0007669"/>
    <property type="project" value="TreeGrafter"/>
</dbReference>
<dbReference type="GO" id="GO:0070628">
    <property type="term" value="F:proteasome binding"/>
    <property type="evidence" value="ECO:0007669"/>
    <property type="project" value="TreeGrafter"/>
</dbReference>
<dbReference type="GO" id="GO:0071630">
    <property type="term" value="P:nuclear protein quality control by the ubiquitin-proteasome system"/>
    <property type="evidence" value="ECO:0007669"/>
    <property type="project" value="InterPro"/>
</dbReference>
<dbReference type="GO" id="GO:0031144">
    <property type="term" value="P:proteasome localization"/>
    <property type="evidence" value="ECO:0007669"/>
    <property type="project" value="InterPro"/>
</dbReference>
<dbReference type="GO" id="GO:0015031">
    <property type="term" value="P:protein transport"/>
    <property type="evidence" value="ECO:0007669"/>
    <property type="project" value="UniProtKB-KW"/>
</dbReference>
<dbReference type="FunFam" id="1.20.58.1590:FF:000001">
    <property type="entry name" value="Tethering factor for nuclear proteasome STS1"/>
    <property type="match status" value="1"/>
</dbReference>
<dbReference type="Gene3D" id="1.20.58.1590">
    <property type="entry name" value="Tethering factor for nuclear proteasome Cut8/Sts1"/>
    <property type="match status" value="1"/>
</dbReference>
<dbReference type="InterPro" id="IPR013868">
    <property type="entry name" value="Cut8/Sts1_fam"/>
</dbReference>
<dbReference type="InterPro" id="IPR038422">
    <property type="entry name" value="Cut8/Sts1_sf"/>
</dbReference>
<dbReference type="PANTHER" id="PTHR28032">
    <property type="entry name" value="FI02826P"/>
    <property type="match status" value="1"/>
</dbReference>
<dbReference type="PANTHER" id="PTHR28032:SF1">
    <property type="entry name" value="FI02826P"/>
    <property type="match status" value="1"/>
</dbReference>
<dbReference type="Pfam" id="PF08559">
    <property type="entry name" value="Cut8"/>
    <property type="match status" value="1"/>
</dbReference>
<organism>
    <name type="scientific">Ajellomyces capsulatus (strain H143)</name>
    <name type="common">Darling's disease fungus</name>
    <name type="synonym">Histoplasma capsulatum</name>
    <dbReference type="NCBI Taxonomy" id="544712"/>
    <lineage>
        <taxon>Eukaryota</taxon>
        <taxon>Fungi</taxon>
        <taxon>Dikarya</taxon>
        <taxon>Ascomycota</taxon>
        <taxon>Pezizomycotina</taxon>
        <taxon>Eurotiomycetes</taxon>
        <taxon>Eurotiomycetidae</taxon>
        <taxon>Onygenales</taxon>
        <taxon>Ajellomycetaceae</taxon>
        <taxon>Histoplasma</taxon>
    </lineage>
</organism>
<proteinExistence type="inferred from homology"/>
<sequence>MNSLLATPPVPPHFYEHCRLSPSRSMSSTNPSGNRKRKAEDDYLPSDHDTRMSASPSNSPAFPPRPLPASRQIKRSRPNISGRPLSLSRLLETLDTDALRSVLRSMCDRHPELATEVVHTAPRPSVSSALQVLNNYQSALHSSIPLGGNSSSDYAYNRVRQHIVNLLDALSDFTPHFLPPNESQTSTALSYLDGATEILHRLPRWDTPQNNLEKDAAYEEMAKAWILVIREAGKRGGGIQLQYGGWDEKLSKHNQTAGGKLQDAVDVLSSNLGWMGTNQDLSNNQGVDASSIRQQLLSGTYGSGMPLKVGRW</sequence>
<accession>C6H861</accession>
<reference key="1">
    <citation type="submission" date="2009-05" db="EMBL/GenBank/DDBJ databases">
        <title>The genome sequence of Ajellomyces capsulatus strain H143.</title>
        <authorList>
            <person name="Champion M."/>
            <person name="Cuomo C.A."/>
            <person name="Ma L.-J."/>
            <person name="Henn M.R."/>
            <person name="Sil A."/>
            <person name="Goldman B."/>
            <person name="Young S.K."/>
            <person name="Kodira C.D."/>
            <person name="Zeng Q."/>
            <person name="Koehrsen M."/>
            <person name="Alvarado L."/>
            <person name="Berlin A.M."/>
            <person name="Borenstein D."/>
            <person name="Chen Z."/>
            <person name="Engels R."/>
            <person name="Freedman E."/>
            <person name="Gellesch M."/>
            <person name="Goldberg J."/>
            <person name="Griggs A."/>
            <person name="Gujja S."/>
            <person name="Heiman D.I."/>
            <person name="Hepburn T.A."/>
            <person name="Howarth C."/>
            <person name="Jen D."/>
            <person name="Larson L."/>
            <person name="Lewis B."/>
            <person name="Mehta T."/>
            <person name="Park D."/>
            <person name="Pearson M."/>
            <person name="Roberts A."/>
            <person name="Saif S."/>
            <person name="Shea T.D."/>
            <person name="Shenoy N."/>
            <person name="Sisk P."/>
            <person name="Stolte C."/>
            <person name="Sykes S."/>
            <person name="Walk T."/>
            <person name="White J."/>
            <person name="Yandava C."/>
            <person name="Klein B."/>
            <person name="McEwen J.G."/>
            <person name="Puccia R."/>
            <person name="Goldman G.H."/>
            <person name="Felipe M.S."/>
            <person name="Nino-Vega G."/>
            <person name="San-Blas G."/>
            <person name="Taylor J.W."/>
            <person name="Mendoza L."/>
            <person name="Galagan J.E."/>
            <person name="Nusbaum C."/>
            <person name="Birren B.W."/>
        </authorList>
    </citation>
    <scope>NUCLEOTIDE SEQUENCE [LARGE SCALE GENOMIC DNA]</scope>
    <source>
        <strain>H143</strain>
    </source>
</reference>
<feature type="chain" id="PRO_0000409388" description="Tethering factor for nuclear proteasome STS1">
    <location>
        <begin position="1"/>
        <end position="312"/>
    </location>
</feature>
<feature type="region of interest" description="Disordered" evidence="2">
    <location>
        <begin position="1"/>
        <end position="82"/>
    </location>
</feature>
<feature type="compositionally biased region" description="Low complexity" evidence="2">
    <location>
        <begin position="21"/>
        <end position="32"/>
    </location>
</feature>
<feature type="compositionally biased region" description="Basic and acidic residues" evidence="2">
    <location>
        <begin position="38"/>
        <end position="51"/>
    </location>
</feature>
<name>STS1_AJECH</name>